<reference key="1">
    <citation type="journal article" date="2006" name="J. Bacteriol.">
        <title>Whole-genome sequence of Listeria welshimeri reveals common steps in genome reduction with Listeria innocua as compared to Listeria monocytogenes.</title>
        <authorList>
            <person name="Hain T."/>
            <person name="Steinweg C."/>
            <person name="Kuenne C.T."/>
            <person name="Billion A."/>
            <person name="Ghai R."/>
            <person name="Chatterjee S.S."/>
            <person name="Domann E."/>
            <person name="Kaerst U."/>
            <person name="Goesmann A."/>
            <person name="Bekel T."/>
            <person name="Bartels D."/>
            <person name="Kaiser O."/>
            <person name="Meyer F."/>
            <person name="Puehler A."/>
            <person name="Weisshaar B."/>
            <person name="Wehland J."/>
            <person name="Liang C."/>
            <person name="Dandekar T."/>
            <person name="Lampidis R."/>
            <person name="Kreft J."/>
            <person name="Goebel W."/>
            <person name="Chakraborty T."/>
        </authorList>
    </citation>
    <scope>NUCLEOTIDE SEQUENCE [LARGE SCALE GENOMIC DNA]</scope>
    <source>
        <strain>ATCC 35897 / DSM 20650 / CCUG 15529 / CIP 8149 / NCTC 11857 / SLCC 5334 / V8</strain>
    </source>
</reference>
<gene>
    <name evidence="1" type="primary">msrA</name>
    <name type="ordered locus">lwe1879</name>
</gene>
<sequence length="177" mass="19874">MTKESLEKATFAGGCFWCMVKPFDTQPGIEKVVSGYTGGHTVNPTYKEVCSGTTGHTEAIEITFDPAIFPYEKLVEVYWQQTDPTDAAGQFVDRGDSYRPVIFCHNDEQKEIAEKSKAALDASGRFKKPIVTEIAKAETFYPAEEYHQDFYKKEKAHYEGYQVASGRAAFIDANWKG</sequence>
<dbReference type="EC" id="1.8.4.11" evidence="1"/>
<dbReference type="EMBL" id="AM263198">
    <property type="protein sequence ID" value="CAK21297.1"/>
    <property type="molecule type" value="Genomic_DNA"/>
</dbReference>
<dbReference type="RefSeq" id="WP_011702646.1">
    <property type="nucleotide sequence ID" value="NC_008555.1"/>
</dbReference>
<dbReference type="SMR" id="A0AJW5"/>
<dbReference type="STRING" id="386043.lwe1879"/>
<dbReference type="GeneID" id="61189780"/>
<dbReference type="KEGG" id="lwe:lwe1879"/>
<dbReference type="eggNOG" id="COG0225">
    <property type="taxonomic scope" value="Bacteria"/>
</dbReference>
<dbReference type="HOGENOM" id="CLU_031040_10_1_9"/>
<dbReference type="OrthoDB" id="4174719at2"/>
<dbReference type="Proteomes" id="UP000000779">
    <property type="component" value="Chromosome"/>
</dbReference>
<dbReference type="GO" id="GO:0033744">
    <property type="term" value="F:L-methionine:thioredoxin-disulfide S-oxidoreductase activity"/>
    <property type="evidence" value="ECO:0007669"/>
    <property type="project" value="RHEA"/>
</dbReference>
<dbReference type="GO" id="GO:0008113">
    <property type="term" value="F:peptide-methionine (S)-S-oxide reductase activity"/>
    <property type="evidence" value="ECO:0007669"/>
    <property type="project" value="UniProtKB-UniRule"/>
</dbReference>
<dbReference type="GO" id="GO:0036211">
    <property type="term" value="P:protein modification process"/>
    <property type="evidence" value="ECO:0007669"/>
    <property type="project" value="UniProtKB-UniRule"/>
</dbReference>
<dbReference type="FunFam" id="3.30.1060.10:FF:000003">
    <property type="entry name" value="Peptide methionine sulfoxide reductase MsrA"/>
    <property type="match status" value="1"/>
</dbReference>
<dbReference type="Gene3D" id="3.30.1060.10">
    <property type="entry name" value="Peptide methionine sulphoxide reductase MsrA"/>
    <property type="match status" value="1"/>
</dbReference>
<dbReference type="HAMAP" id="MF_01401">
    <property type="entry name" value="MsrA"/>
    <property type="match status" value="1"/>
</dbReference>
<dbReference type="InterPro" id="IPR002569">
    <property type="entry name" value="Met_Sox_Rdtase_MsrA_dom"/>
</dbReference>
<dbReference type="InterPro" id="IPR036509">
    <property type="entry name" value="Met_Sox_Rdtase_MsrA_sf"/>
</dbReference>
<dbReference type="NCBIfam" id="TIGR00401">
    <property type="entry name" value="msrA"/>
    <property type="match status" value="1"/>
</dbReference>
<dbReference type="PANTHER" id="PTHR43774">
    <property type="entry name" value="PEPTIDE METHIONINE SULFOXIDE REDUCTASE"/>
    <property type="match status" value="1"/>
</dbReference>
<dbReference type="PANTHER" id="PTHR43774:SF1">
    <property type="entry name" value="PEPTIDE METHIONINE SULFOXIDE REDUCTASE MSRA 2"/>
    <property type="match status" value="1"/>
</dbReference>
<dbReference type="Pfam" id="PF01625">
    <property type="entry name" value="PMSR"/>
    <property type="match status" value="1"/>
</dbReference>
<dbReference type="SUPFAM" id="SSF55068">
    <property type="entry name" value="Peptide methionine sulfoxide reductase"/>
    <property type="match status" value="1"/>
</dbReference>
<proteinExistence type="inferred from homology"/>
<organism>
    <name type="scientific">Listeria welshimeri serovar 6b (strain ATCC 35897 / DSM 20650 / CCUG 15529 / CIP 8149 / NCTC 11857 / SLCC 5334 / V8)</name>
    <dbReference type="NCBI Taxonomy" id="386043"/>
    <lineage>
        <taxon>Bacteria</taxon>
        <taxon>Bacillati</taxon>
        <taxon>Bacillota</taxon>
        <taxon>Bacilli</taxon>
        <taxon>Bacillales</taxon>
        <taxon>Listeriaceae</taxon>
        <taxon>Listeria</taxon>
    </lineage>
</organism>
<name>MSRA_LISW6</name>
<evidence type="ECO:0000255" key="1">
    <source>
        <dbReference type="HAMAP-Rule" id="MF_01401"/>
    </source>
</evidence>
<protein>
    <recommendedName>
        <fullName evidence="1">Peptide methionine sulfoxide reductase MsrA</fullName>
        <shortName evidence="1">Protein-methionine-S-oxide reductase</shortName>
        <ecNumber evidence="1">1.8.4.11</ecNumber>
    </recommendedName>
    <alternativeName>
        <fullName evidence="1">Peptide-methionine (S)-S-oxide reductase</fullName>
        <shortName evidence="1">Peptide Met(O) reductase</shortName>
    </alternativeName>
</protein>
<comment type="function">
    <text evidence="1">Has an important function as a repair enzyme for proteins that have been inactivated by oxidation. Catalyzes the reversible oxidation-reduction of methionine sulfoxide in proteins to methionine.</text>
</comment>
<comment type="catalytic activity">
    <reaction evidence="1">
        <text>L-methionyl-[protein] + [thioredoxin]-disulfide + H2O = L-methionyl-(S)-S-oxide-[protein] + [thioredoxin]-dithiol</text>
        <dbReference type="Rhea" id="RHEA:14217"/>
        <dbReference type="Rhea" id="RHEA-COMP:10698"/>
        <dbReference type="Rhea" id="RHEA-COMP:10700"/>
        <dbReference type="Rhea" id="RHEA-COMP:12313"/>
        <dbReference type="Rhea" id="RHEA-COMP:12315"/>
        <dbReference type="ChEBI" id="CHEBI:15377"/>
        <dbReference type="ChEBI" id="CHEBI:16044"/>
        <dbReference type="ChEBI" id="CHEBI:29950"/>
        <dbReference type="ChEBI" id="CHEBI:44120"/>
        <dbReference type="ChEBI" id="CHEBI:50058"/>
        <dbReference type="EC" id="1.8.4.11"/>
    </reaction>
</comment>
<comment type="catalytic activity">
    <reaction evidence="1">
        <text>[thioredoxin]-disulfide + L-methionine + H2O = L-methionine (S)-S-oxide + [thioredoxin]-dithiol</text>
        <dbReference type="Rhea" id="RHEA:19993"/>
        <dbReference type="Rhea" id="RHEA-COMP:10698"/>
        <dbReference type="Rhea" id="RHEA-COMP:10700"/>
        <dbReference type="ChEBI" id="CHEBI:15377"/>
        <dbReference type="ChEBI" id="CHEBI:29950"/>
        <dbReference type="ChEBI" id="CHEBI:50058"/>
        <dbReference type="ChEBI" id="CHEBI:57844"/>
        <dbReference type="ChEBI" id="CHEBI:58772"/>
        <dbReference type="EC" id="1.8.4.11"/>
    </reaction>
</comment>
<comment type="similarity">
    <text evidence="1">Belongs to the MsrA Met sulfoxide reductase family.</text>
</comment>
<feature type="chain" id="PRO_1000068337" description="Peptide methionine sulfoxide reductase MsrA">
    <location>
        <begin position="1"/>
        <end position="177"/>
    </location>
</feature>
<feature type="active site" evidence="1">
    <location>
        <position position="15"/>
    </location>
</feature>
<keyword id="KW-0560">Oxidoreductase</keyword>
<accession>A0AJW5</accession>